<keyword id="KW-0903">Direct protein sequencing</keyword>
<keyword id="KW-0379">Hydroxylation</keyword>
<keyword id="KW-0677">Repeat</keyword>
<keyword id="KW-0964">Secreted</keyword>
<proteinExistence type="evidence at protein level"/>
<dbReference type="EMBL" id="X54422">
    <property type="protein sequence ID" value="CAA38294.1"/>
    <property type="molecule type" value="Genomic_DNA"/>
</dbReference>
<dbReference type="PIR" id="S23760">
    <property type="entry name" value="S23760"/>
</dbReference>
<dbReference type="GO" id="GO:0005576">
    <property type="term" value="C:extracellular region"/>
    <property type="evidence" value="ECO:0000314"/>
    <property type="project" value="UniProtKB"/>
</dbReference>
<dbReference type="InterPro" id="IPR002964">
    <property type="entry name" value="Adhesive_plaq"/>
</dbReference>
<dbReference type="PRINTS" id="PR01216">
    <property type="entry name" value="ADHESIVEI"/>
</dbReference>
<reference key="1">
    <citation type="journal article" date="1990" name="Biotechnol. Prog.">
        <title>Structural and functional repetition in a marine mussel adhesive protein.</title>
        <authorList>
            <person name="Filpula D.R."/>
            <person name="Lee S.M."/>
            <person name="Link R.P."/>
            <person name="Strausberg S.L."/>
            <person name="Strausberg R.L."/>
        </authorList>
    </citation>
    <scope>NUCLEOTIDE SEQUENCE [GENOMIC DNA]</scope>
</reference>
<reference key="2">
    <citation type="journal article" date="1983" name="J. Biol. Chem.">
        <title>Evidence for a repeating 3,4-dihydroxyphenylalanine- and hydroxyproline-containing decapeptide in the adhesive protein of the mussel, Mytilus edulis L.</title>
        <authorList>
            <person name="Waite J.H."/>
        </authorList>
    </citation>
    <scope>PARTIAL PROTEIN SEQUENCE</scope>
    <scope>HYDROXYLATION AT PRO-89; TYR-91; PRO-92; PRO-93; TYR-95; PRO-115; TYR-117; PRO-118; TYR-121; PRO-145; TYR-147; PRO-148; PRO-149; TYR-151; PRO-155; TYR-157; PRO-158; PRO-159; TYR-161; PRO-175; TYR-177; PRO-178; PRO-179; TYR-181; PRO-185; TYR-187; PRO-188; PRO-189; TYR-191; PRO-195; TYR-197; PRO-198; PRO-199; TYR-201; PRO-211; TYR-213; PRO-214; TYR-217; PRO-221; TYR-223; PRO-224; PRO-225; TYR-227; PRO-237; TYR-239; PRO-240; PRO-241; TYR-243; PRO-247; TYR-249; PRO-250; PRO-251; TYR-253; PRO-257; TYR-259; PRO-260; PRO-261; TYR-263; PRO-285; TYR-287; PRO-288; PRO-289; TYR-291; PRO-295; TYR-297; PRO-298; PRO-299; TYR-301; PRO-305; TYR-307; PRO-308; PRO-309; TYR-311; PRO-315; TYR-317; PRO-318; PRO-319; TYR-321; PRO-325; TYR-327; PRO-328; PRO-329; TYR-331; PRO-335; TYR-337; PRO-338; PRO-339; TYR-341; PRO-351; TYR-353; PRO-354; TYR-357; PRO-361; TYR-363; PRO-364; PRO-365; TYR-367; PRO-371; TYR-373; PRO-374; PRO-375; TYR-377; PRO-387; TYR-389; PRO-390; PRO-391; TYR-393; PRO-397; TYR-399; PRO-400; PRO-401; TYR-403; PRO-407; TYR-409; PRO-410; PRO-411; TYR-413; PRO-423; TYR-425; PRO-426; TYR-429; PRO-433; TYR-435; PRO-436; PRO-437; TYR-439; PRO-443; TYR-445; PRO-446; PRO-447; TYR-449; PRO-459; TYR-461; PRO-462; TYR-465; PRO-469; TYR-471; PRO-472; TYR-475; PRO-479; TYR-481; PRO-482; PRO-483; TYR-485; PRO-519; TYR-521; PRO-522; PRO-523; TYR-525; TYR-541; PRO-542; PRO-543; TYR-545; PRO-549; TYR-551; PRO-552; TYR-555; PRO-559; TYR-561; PRO-562; PRO-563; TYR-565; PRO-569; TYR-571; PRO-572; PRO-573; TYR-575; PRO-579; TYR-581; PRO-582; PRO-583; TYR-585; PRO-595; TYR-597; PRO-598; TYR-601; PRO-605; TYR-607; PRO-608; PRO-609; TYR-611; PRO-615; TYR-617; PRO-618; PRO-619; TYR-621; PRO-625; TYR-627; PRO-628; PRO-629; TYR-631; PRO-635; TYR-637; PRO-638; TYR-641; PRO-645; TYR-647; PRO-648; PRO-649; TYR-651; TYR-657; PRO-658; PRO-659; TYR-661; PRO-665; TYR-667; PRO-668; PRO-669; TYR-671; PRO-675; TYR-677; PRO-678; PRO-679; TYR-681; PRO-701; TYR-703; PRO-704; PRO-705; TYR-707; PRO-711; TYR-713; PRO-714; PRO-715; TYR-717; PRO-721; TYR-723; PRO-724; PRO-725; TYR-727; PRO-737; TYR-739; PRO-740; TYR-743; PRO-753; TYR-755; PRO-756; PRO-757; TYR-759; PRO-763; TYR-765; PRO-766; PRO-767; TYR-769; PRO-773; TYR-775; PRO-776; PRO-777; TYR-779; PRO-813; TYR-815; PRO-816; PRO-817; TYR-819; PRO-833; TYR-835; PRO-836; PRO-837; TYR-839; TYR-865; PRO-866; PRO-867 AND TYR-869</scope>
</reference>
<reference key="3">
    <citation type="journal article" date="1994" name="J. Am. Chem. Soc.">
        <title>Trans-2,3-cis-3,4-dihydroxyproline, a new naturally occurring amino acid, is the sixth residue in the tandemly repeated consensus decapeptides of an adhesive protein from Mytilus edulis.</title>
        <authorList>
            <person name="Taylor S.W."/>
            <person name="Waite J.H."/>
            <person name="Ross M.M."/>
            <person name="Shabanowitz J."/>
            <person name="Hunt D.F."/>
        </authorList>
    </citation>
    <scope>HYDROXYLATION AT PRO-89; TYR-91; PRO-92; PRO-93; TYR-95; PRO-115; TYR-117; PRO-118; TYR-121; PRO-145; TYR-147; PRO-148; PRO-149; TYR-151; PRO-155; TYR-157; PRO-158; PRO-159; TYR-161; PRO-175; TYR-177; PRO-178; PRO-179; TYR-181; PRO-185; TYR-187; PRO-188; PRO-189; TYR-191; PRO-195; TYR-197; PRO-198; PRO-199; TYR-201; PRO-211; TYR-213; PRO-214; TYR-217; PRO-221; TYR-223; PRO-224; PRO-225; TYR-227; PRO-237; TYR-239; PRO-240; PRO-241; TYR-243; PRO-247; TYR-249; PRO-250; PRO-251; TYR-253; PRO-257; TYR-259; PRO-260; PRO-261; TYR-263; PRO-285; TYR-287; PRO-288; PRO-289; TYR-291; PRO-295; TYR-297; PRO-298; PRO-299; TYR-301; PRO-305; TYR-307; PRO-308; PRO-309; TYR-311; PRO-315; TYR-317; PRO-318; PRO-319; TYR-321; PRO-325; TYR-327; PRO-328; PRO-329; TYR-331; PRO-335; TYR-337; PRO-338; PRO-339; TYR-341; PRO-351; TYR-353; PRO-354; TYR-357; PRO-361; TYR-363; PRO-364; PRO-365; TYR-367; PRO-371; TYR-373; PRO-374; PRO-375; TYR-377; PRO-387; TYR-389; PRO-390; PRO-391; TYR-393; PRO-397; TYR-399; PRO-400; PRO-401; TYR-403; PRO-407; TYR-409; PRO-410; PRO-411; TYR-413; PRO-423; TYR-425; PRO-426; TYR-429; PRO-433; TYR-435; PRO-436; PRO-437; TYR-439; PRO-443; TYR-445; PRO-446; PRO-447; TYR-449; PRO-459; TYR-461; PRO-462; TYR-465; PRO-469; TYR-471; PRO-472; TYR-475; PRO-479; TYR-481; PRO-482; PRO-483; TYR-485; PRO-519; TYR-521; PRO-522; PRO-523; TYR-525; TYR-541; PRO-542; PRO-543; TYR-545; PRO-549; TYR-551; PRO-552; TYR-555; PRO-559; TYR-561; PRO-562; PRO-563; TYR-565; PRO-569; TYR-571; PRO-572; PRO-573; TYR-575; PRO-579; TYR-581; PRO-582; PRO-583; TYR-585; PRO-595; TYR-597; PRO-598; TYR-601; PRO-605; TYR-607; PRO-608; PRO-609; TYR-611; PRO-615; TYR-617; PRO-618; PRO-619; TYR-621; PRO-625; TYR-627; PRO-628; PRO-629; TYR-631; PRO-635; TYR-637; PRO-638; TYR-641; PRO-645; TYR-647; PRO-648; PRO-649; TYR-651; TYR-657; PRO-658; PRO-659; TYR-661; PRO-665; TYR-667; PRO-668; PRO-669; TYR-671; PRO-675; TYR-677; PRO-678; PRO-679; TYR-681; PRO-701; TYR-703; PRO-704; PRO-705; TYR-707; PRO-711; TYR-713; PRO-714; PRO-715; TYR-717; PRO-721; TYR-723; PRO-724; PRO-725; TYR-727; PRO-737; TYR-739; PRO-740; TYR-743; PRO-753; TYR-755; PRO-756; PRO-757; TYR-759; PRO-763; TYR-765; PRO-766; PRO-767; TYR-769; PRO-773; TYR-775; PRO-776; PRO-777; TYR-779; PRO-813; TYR-815; PRO-816; PRO-817; TYR-819; PRO-833; TYR-835; PRO-836; PRO-837; TYR-839; TYR-865; PRO-866; PRO-867 AND TYR-869</scope>
    <scope>IDENTIFICATION BY MASS SPECTROMETRY</scope>
    <scope>STRUCTURE BY NMR</scope>
</reference>
<sequence>TKHEPVYKPVKTSYSAPYKPPTYQPLKKKVDYRPTKSYPPTYGSKTNYLPLAKKLSSYKPIKTTYNAKTNYPPVYKPKMTYPPTYKPKPSYPPTYKSKPTYKPKITYPPTYKAKPSYPSSYKPKKTYPPTYKPKLTYPPTYKPKPSYPPTYKPKPSYPPSYKTKKTYPSSYKAKPSYPPTYKAKPSYPPTYKAKPSYPPTYKAKPTYKAKPTYPSTYKAKPSYPPTYKAKPTYKAKPSYPPTYKAKPSYPPTYKAKPSYPPTYKAKPTYKAKPTYKAKPTYKAKPSYPPTYKAKPSYPPTYKAKPSYPPTYKAKPSYPPTYKAKPSYPPTYKAKPSYPPTYKAKPTYKAKPTYPSTYKAKPSYPPTYKAKPSYPPTYKAKPTYKAKPSYPPTYKAKPSYPPTYKAKPSYPPTYKAKPTYKAKPTYPSTYKAKPSYPPSYKAKPSYPPTYKAKPTYKAKPTYPSTYKAKPSYPASYKAKPSYPPTYKSKSSYPSSYKPKKTYPPTYKPKLTYKPTYKPKPSYPPSYKPKTTYPPTYKPKISYPPTYKAKPSYPATYKAKPSYPPTYKAKPSYPPTYKAKPSYPPTYKAKPSYKAKPTYPSTYKAKPSYPPTYKAKPSYPPTYKAKPSYPPTYKAKPTYPSTYKAKPSYPPTYKPKISYPPTYKAKPSYPPTYKAKPSYPPTYKAKPTYKAKPTNPSTYKAKPSYPPTYKAKPSYPPTYKAKPSYPPTYKAKPTYKAKPTYPSTYKAKPTYKAKPTYPPTYKAKPSYPPTYKPKPSYPPTYKSKSIYPSSYKPKKTYPPTYKPKLTYPPTYKPKPSYPPSYKPKITYPSTYKLKPSYPPTYKSKTSYPPTYNKKISYPSSYKAKTSYPPAYKPTNRY</sequence>
<organism>
    <name type="scientific">Mytilus edulis</name>
    <name type="common">Blue mussel</name>
    <dbReference type="NCBI Taxonomy" id="6550"/>
    <lineage>
        <taxon>Eukaryota</taxon>
        <taxon>Metazoa</taxon>
        <taxon>Spiralia</taxon>
        <taxon>Lophotrochozoa</taxon>
        <taxon>Mollusca</taxon>
        <taxon>Bivalvia</taxon>
        <taxon>Autobranchia</taxon>
        <taxon>Pteriomorphia</taxon>
        <taxon>Mytilida</taxon>
        <taxon>Mytiloidea</taxon>
        <taxon>Mytilidae</taxon>
        <taxon>Mytilinae</taxon>
        <taxon>Mytilus</taxon>
    </lineage>
</organism>
<feature type="chain" id="PRO_0000087326" description="Adhesive plaque matrix protein">
    <location>
        <begin position="1" status="less than"/>
        <end position="875"/>
    </location>
</feature>
<feature type="repeat" description="1">
    <location>
        <begin position="75"/>
        <end position="84"/>
    </location>
</feature>
<feature type="repeat" description="2">
    <location>
        <begin position="85"/>
        <end position="94"/>
    </location>
</feature>
<feature type="repeat" description="3; truncated">
    <location>
        <begin position="95"/>
        <end position="100"/>
    </location>
</feature>
<feature type="repeat" description="4">
    <location>
        <begin position="101"/>
        <end position="110"/>
    </location>
</feature>
<feature type="repeat" description="5">
    <location>
        <begin position="111"/>
        <end position="120"/>
    </location>
</feature>
<feature type="repeat" description="6">
    <location>
        <begin position="121"/>
        <end position="130"/>
    </location>
</feature>
<feature type="repeat" description="7">
    <location>
        <begin position="131"/>
        <end position="140"/>
    </location>
</feature>
<feature type="repeat" description="8">
    <location>
        <begin position="141"/>
        <end position="150"/>
    </location>
</feature>
<feature type="repeat" description="9">
    <location>
        <begin position="151"/>
        <end position="160"/>
    </location>
</feature>
<feature type="repeat" description="10">
    <location>
        <begin position="161"/>
        <end position="170"/>
    </location>
</feature>
<feature type="repeat" description="11">
    <location>
        <begin position="171"/>
        <end position="180"/>
    </location>
</feature>
<feature type="repeat" description="12">
    <location>
        <begin position="181"/>
        <end position="190"/>
    </location>
</feature>
<feature type="repeat" description="13">
    <location>
        <begin position="191"/>
        <end position="200"/>
    </location>
</feature>
<feature type="repeat" description="14; truncated">
    <location>
        <begin position="201"/>
        <end position="206"/>
    </location>
</feature>
<feature type="repeat" description="15">
    <location>
        <begin position="207"/>
        <end position="216"/>
    </location>
</feature>
<feature type="repeat" description="16">
    <location>
        <begin position="217"/>
        <end position="226"/>
    </location>
</feature>
<feature type="repeat" description="17; truncated">
    <location>
        <begin position="227"/>
        <end position="232"/>
    </location>
</feature>
<feature type="repeat" description="18">
    <location>
        <begin position="233"/>
        <end position="242"/>
    </location>
</feature>
<feature type="repeat" description="19">
    <location>
        <begin position="243"/>
        <end position="252"/>
    </location>
</feature>
<feature type="repeat" description="20">
    <location>
        <begin position="253"/>
        <end position="262"/>
    </location>
</feature>
<feature type="repeat" description="21; truncated">
    <location>
        <begin position="263"/>
        <end position="268"/>
    </location>
</feature>
<feature type="repeat" description="22; truncated">
    <location>
        <begin position="269"/>
        <end position="274"/>
    </location>
</feature>
<feature type="repeat" description="23; truncated">
    <location>
        <begin position="275"/>
        <end position="280"/>
    </location>
</feature>
<feature type="repeat" description="24">
    <location>
        <begin position="281"/>
        <end position="290"/>
    </location>
</feature>
<feature type="repeat" description="25">
    <location>
        <begin position="291"/>
        <end position="300"/>
    </location>
</feature>
<feature type="repeat" description="26">
    <location>
        <begin position="301"/>
        <end position="310"/>
    </location>
</feature>
<feature type="repeat" description="27">
    <location>
        <begin position="311"/>
        <end position="320"/>
    </location>
</feature>
<feature type="repeat" description="28">
    <location>
        <begin position="321"/>
        <end position="330"/>
    </location>
</feature>
<feature type="repeat" description="29">
    <location>
        <begin position="331"/>
        <end position="340"/>
    </location>
</feature>
<feature type="repeat" description="30; truncated">
    <location>
        <begin position="341"/>
        <end position="346"/>
    </location>
</feature>
<feature type="repeat" description="31">
    <location>
        <begin position="347"/>
        <end position="356"/>
    </location>
</feature>
<feature type="repeat" description="32">
    <location>
        <begin position="357"/>
        <end position="366"/>
    </location>
</feature>
<feature type="repeat" description="33">
    <location>
        <begin position="367"/>
        <end position="376"/>
    </location>
</feature>
<feature type="repeat" description="34; truncated">
    <location>
        <begin position="377"/>
        <end position="382"/>
    </location>
</feature>
<feature type="repeat" description="35">
    <location>
        <begin position="383"/>
        <end position="392"/>
    </location>
</feature>
<feature type="repeat" description="36">
    <location>
        <begin position="393"/>
        <end position="402"/>
    </location>
</feature>
<feature type="repeat" description="37">
    <location>
        <begin position="403"/>
        <end position="412"/>
    </location>
</feature>
<feature type="repeat" description="38">
    <location>
        <begin position="413"/>
        <end position="418"/>
    </location>
</feature>
<feature type="repeat" description="39">
    <location>
        <begin position="419"/>
        <end position="428"/>
    </location>
</feature>
<feature type="repeat" description="40">
    <location>
        <begin position="429"/>
        <end position="438"/>
    </location>
</feature>
<feature type="repeat" description="41">
    <location>
        <begin position="439"/>
        <end position="448"/>
    </location>
</feature>
<feature type="repeat" description="42; truncated">
    <location>
        <begin position="449"/>
        <end position="454"/>
    </location>
</feature>
<feature type="repeat" description="43">
    <location>
        <begin position="455"/>
        <end position="464"/>
    </location>
</feature>
<feature type="repeat" description="44">
    <location>
        <begin position="465"/>
        <end position="474"/>
    </location>
</feature>
<feature type="repeat" description="45">
    <location>
        <begin position="475"/>
        <end position="484"/>
    </location>
</feature>
<feature type="repeat" description="46">
    <location>
        <begin position="485"/>
        <end position="494"/>
    </location>
</feature>
<feature type="repeat" description="47">
    <location>
        <begin position="495"/>
        <end position="504"/>
    </location>
</feature>
<feature type="repeat" description="48">
    <location>
        <begin position="505"/>
        <end position="514"/>
    </location>
</feature>
<feature type="repeat" description="49">
    <location>
        <begin position="515"/>
        <end position="524"/>
    </location>
</feature>
<feature type="repeat" description="50">
    <location>
        <begin position="525"/>
        <end position="534"/>
    </location>
</feature>
<feature type="repeat" description="51">
    <location>
        <begin position="535"/>
        <end position="544"/>
    </location>
</feature>
<feature type="repeat" description="52">
    <location>
        <begin position="545"/>
        <end position="554"/>
    </location>
</feature>
<feature type="repeat" description="53">
    <location>
        <begin position="555"/>
        <end position="564"/>
    </location>
</feature>
<feature type="repeat" description="54">
    <location>
        <begin position="565"/>
        <end position="574"/>
    </location>
</feature>
<feature type="repeat" description="55">
    <location>
        <begin position="575"/>
        <end position="584"/>
    </location>
</feature>
<feature type="repeat" description="56; truncated">
    <location>
        <begin position="585"/>
        <end position="590"/>
    </location>
</feature>
<feature type="repeat" description="57">
    <location>
        <begin position="591"/>
        <end position="600"/>
    </location>
</feature>
<feature type="repeat" description="58">
    <location>
        <begin position="601"/>
        <end position="610"/>
    </location>
</feature>
<feature type="repeat" description="59">
    <location>
        <begin position="611"/>
        <end position="620"/>
    </location>
</feature>
<feature type="repeat" description="60">
    <location>
        <begin position="621"/>
        <end position="630"/>
    </location>
</feature>
<feature type="repeat" description="61">
    <location>
        <begin position="631"/>
        <end position="640"/>
    </location>
</feature>
<feature type="repeat" description="62">
    <location>
        <begin position="641"/>
        <end position="650"/>
    </location>
</feature>
<feature type="repeat" description="63">
    <location>
        <begin position="651"/>
        <end position="660"/>
    </location>
</feature>
<feature type="repeat" description="64">
    <location>
        <begin position="661"/>
        <end position="670"/>
    </location>
</feature>
<feature type="repeat" description="65">
    <location>
        <begin position="671"/>
        <end position="680"/>
    </location>
</feature>
<feature type="repeat" description="66; truncated">
    <location>
        <begin position="681"/>
        <end position="686"/>
    </location>
</feature>
<feature type="repeat" description="67">
    <location>
        <begin position="687"/>
        <end position="696"/>
    </location>
</feature>
<feature type="repeat" description="68">
    <location>
        <begin position="697"/>
        <end position="706"/>
    </location>
</feature>
<feature type="repeat" description="69">
    <location>
        <begin position="707"/>
        <end position="716"/>
    </location>
</feature>
<feature type="repeat" description="70">
    <location>
        <begin position="717"/>
        <end position="726"/>
    </location>
</feature>
<feature type="repeat" description="71; truncated">
    <location>
        <begin position="727"/>
        <end position="732"/>
    </location>
</feature>
<feature type="repeat" description="72">
    <location>
        <begin position="733"/>
        <end position="742"/>
    </location>
</feature>
<feature type="repeat" description="73; truncated">
    <location>
        <begin position="743"/>
        <end position="748"/>
    </location>
</feature>
<feature type="repeat" description="74">
    <location>
        <begin position="749"/>
        <end position="758"/>
    </location>
</feature>
<feature type="repeat" description="75">
    <location>
        <begin position="759"/>
        <end position="768"/>
    </location>
</feature>
<feature type="repeat" description="76">
    <location>
        <begin position="769"/>
        <end position="778"/>
    </location>
</feature>
<feature type="repeat" description="77">
    <location>
        <begin position="779"/>
        <end position="788"/>
    </location>
</feature>
<feature type="repeat" description="78">
    <location>
        <begin position="789"/>
        <end position="798"/>
    </location>
</feature>
<feature type="repeat" description="79">
    <location>
        <begin position="799"/>
        <end position="808"/>
    </location>
</feature>
<feature type="repeat" description="80">
    <location>
        <begin position="809"/>
        <end position="818"/>
    </location>
</feature>
<feature type="repeat" description="81">
    <location>
        <begin position="819"/>
        <end position="828"/>
    </location>
</feature>
<feature type="repeat" description="82">
    <location>
        <begin position="829"/>
        <end position="838"/>
    </location>
</feature>
<feature type="repeat" description="83">
    <location>
        <begin position="839"/>
        <end position="848"/>
    </location>
</feature>
<feature type="repeat" description="84">
    <location>
        <begin position="849"/>
        <end position="858"/>
    </location>
</feature>
<feature type="repeat" description="85">
    <location>
        <begin position="859"/>
        <end position="868"/>
    </location>
</feature>
<feature type="region of interest" description="85 X 10 AA tandem repeats of Y-[KN]-[PALKTS]-K-[LPMIKST]-[ST]-[YN]-[PK]-[PAS]-[STA]">
    <location>
        <begin position="75"/>
        <end position="868"/>
    </location>
</feature>
<feature type="region of interest" description="Disordered" evidence="1">
    <location>
        <begin position="80"/>
        <end position="267"/>
    </location>
</feature>
<feature type="region of interest" description="Disordered" evidence="1">
    <location>
        <begin position="279"/>
        <end position="537"/>
    </location>
</feature>
<feature type="region of interest" description="Disordered" evidence="1">
    <location>
        <begin position="556"/>
        <end position="820"/>
    </location>
</feature>
<feature type="compositionally biased region" description="Low complexity" evidence="1">
    <location>
        <begin position="93"/>
        <end position="139"/>
    </location>
</feature>
<feature type="compositionally biased region" description="Pro residues" evidence="1">
    <location>
        <begin position="140"/>
        <end position="158"/>
    </location>
</feature>
<feature type="compositionally biased region" description="Low complexity" evidence="1">
    <location>
        <begin position="166"/>
        <end position="218"/>
    </location>
</feature>
<feature type="compositionally biased region" description="Low complexity" evidence="1">
    <location>
        <begin position="425"/>
        <end position="466"/>
    </location>
</feature>
<feature type="compositionally biased region" description="Low complexity" evidence="1">
    <location>
        <begin position="474"/>
        <end position="518"/>
    </location>
</feature>
<feature type="compositionally biased region" description="Low complexity" evidence="1">
    <location>
        <begin position="526"/>
        <end position="537"/>
    </location>
</feature>
<feature type="compositionally biased region" description="Low complexity" evidence="1">
    <location>
        <begin position="600"/>
        <end position="642"/>
    </location>
</feature>
<feature type="compositionally biased region" description="Low complexity" evidence="1">
    <location>
        <begin position="741"/>
        <end position="763"/>
    </location>
</feature>
<feature type="compositionally biased region" description="Pro residues" evidence="1">
    <location>
        <begin position="764"/>
        <end position="776"/>
    </location>
</feature>
<feature type="compositionally biased region" description="Low complexity" evidence="1">
    <location>
        <begin position="777"/>
        <end position="807"/>
    </location>
</feature>
<feature type="compositionally biased region" description="Pro residues" evidence="1">
    <location>
        <begin position="808"/>
        <end position="819"/>
    </location>
</feature>
<feature type="modified residue" description="4-hydroxyproline; partial" evidence="4 5">
    <location>
        <position position="89"/>
    </location>
</feature>
<feature type="modified residue" description="3',4'-dihydroxyphenylalanine" evidence="4 5">
    <location>
        <position position="91"/>
    </location>
</feature>
<feature type="modified residue" description="(3R,4S)-3,4-dihydroxyproline" evidence="4 5">
    <location>
        <position position="92"/>
    </location>
</feature>
<feature type="modified residue" description="4-hydroxyproline" evidence="4 5">
    <location>
        <position position="93"/>
    </location>
</feature>
<feature type="modified residue" description="3',4'-dihydroxyphenylalanine" evidence="4 5">
    <location>
        <position position="95"/>
    </location>
</feature>
<feature type="modified residue" description="4-hydroxyproline; partial" evidence="4 5">
    <location>
        <position position="115"/>
    </location>
</feature>
<feature type="modified residue" description="3',4'-dihydroxyphenylalanine" evidence="4 5">
    <location>
        <position position="117"/>
    </location>
</feature>
<feature type="modified residue" description="(3R,4S)-3,4-dihydroxyproline" evidence="4 5">
    <location>
        <position position="118"/>
    </location>
</feature>
<feature type="modified residue" description="3',4'-dihydroxyphenylalanine" evidence="4 5">
    <location>
        <position position="121"/>
    </location>
</feature>
<feature type="modified residue" description="4-hydroxyproline; partial" evidence="4 5">
    <location>
        <position position="145"/>
    </location>
</feature>
<feature type="modified residue" description="3',4'-dihydroxyphenylalanine" evidence="4 5">
    <location>
        <position position="147"/>
    </location>
</feature>
<feature type="modified residue" description="(3R,4S)-3,4-dihydroxyproline" evidence="4 5">
    <location>
        <position position="148"/>
    </location>
</feature>
<feature type="modified residue" description="4-hydroxyproline" evidence="4 5">
    <location>
        <position position="149"/>
    </location>
</feature>
<feature type="modified residue" description="3',4'-dihydroxyphenylalanine" evidence="4 5">
    <location>
        <position position="151"/>
    </location>
</feature>
<feature type="modified residue" description="4-hydroxyproline; partial" evidence="4 5">
    <location>
        <position position="155"/>
    </location>
</feature>
<feature type="modified residue" description="3',4'-dihydroxyphenylalanine" evidence="4 5">
    <location>
        <position position="157"/>
    </location>
</feature>
<feature type="modified residue" description="(3R,4S)-3,4-dihydroxyproline" evidence="4 5">
    <location>
        <position position="158"/>
    </location>
</feature>
<feature type="modified residue" description="4-hydroxyproline" evidence="4 5">
    <location>
        <position position="159"/>
    </location>
</feature>
<feature type="modified residue" description="3',4'-dihydroxyphenylalanine" evidence="4 5">
    <location>
        <position position="161"/>
    </location>
</feature>
<feature type="modified residue" description="4-hydroxyproline; partial" evidence="2 3">
    <location>
        <position position="175"/>
    </location>
</feature>
<feature type="modified residue" description="3',4'-dihydroxyphenylalanine" evidence="2 3">
    <location>
        <position position="177"/>
    </location>
</feature>
<feature type="modified residue" description="(3R,4S)-3,4-dihydroxyproline" evidence="2 3">
    <location>
        <position position="178"/>
    </location>
</feature>
<feature type="modified residue" description="4-hydroxyproline" evidence="2 3">
    <location>
        <position position="179"/>
    </location>
</feature>
<feature type="modified residue" description="3',4'-dihydroxyphenylalanine" evidence="2 3">
    <location>
        <position position="181"/>
    </location>
</feature>
<feature type="modified residue" description="4-hydroxyproline; partial" evidence="2 3">
    <location>
        <position position="185"/>
    </location>
</feature>
<feature type="modified residue" description="3',4'-dihydroxyphenylalanine" evidence="2 3">
    <location>
        <position position="187"/>
    </location>
</feature>
<feature type="modified residue" description="(3R,4S)-3,4-dihydroxyproline" evidence="2 3">
    <location>
        <position position="188"/>
    </location>
</feature>
<feature type="modified residue" description="4-hydroxyproline" evidence="2 3">
    <location>
        <position position="189"/>
    </location>
</feature>
<feature type="modified residue" description="3',4'-dihydroxyphenylalanine" evidence="2 3">
    <location>
        <position position="191"/>
    </location>
</feature>
<feature type="modified residue" description="4-hydroxyproline; partial" evidence="2 3">
    <location>
        <position position="195"/>
    </location>
</feature>
<feature type="modified residue" description="3',4'-dihydroxyphenylalanine" evidence="2 3">
    <location>
        <position position="197"/>
    </location>
</feature>
<feature type="modified residue" description="(3R,4S)-3,4-dihydroxyproline" evidence="2 3">
    <location>
        <position position="198"/>
    </location>
</feature>
<feature type="modified residue" description="4-hydroxyproline" evidence="2 3">
    <location>
        <position position="199"/>
    </location>
</feature>
<feature type="modified residue" description="3',4'-dihydroxyphenylalanine" evidence="2 3">
    <location>
        <position position="201"/>
    </location>
</feature>
<feature type="modified residue" description="4-hydroxyproline; partial" evidence="2 3">
    <location>
        <position position="211"/>
    </location>
</feature>
<feature type="modified residue" description="3',4'-dihydroxyphenylalanine" evidence="4 5">
    <location>
        <position position="213"/>
    </location>
</feature>
<feature type="modified residue" description="(3R,4S)-3,4-dihydroxyproline" evidence="4 5">
    <location>
        <position position="214"/>
    </location>
</feature>
<feature type="modified residue" description="3',4'-dihydroxyphenylalanine" evidence="4 5">
    <location>
        <position position="217"/>
    </location>
</feature>
<feature type="modified residue" description="4-hydroxyproline; partial" evidence="2 3">
    <location>
        <position position="221"/>
    </location>
</feature>
<feature type="modified residue" description="3',4'-dihydroxyphenylalanine" evidence="2 3">
    <location>
        <position position="223"/>
    </location>
</feature>
<feature type="modified residue" description="(3R,4S)-3,4-dihydroxyproline" evidence="2 3">
    <location>
        <position position="224"/>
    </location>
</feature>
<feature type="modified residue" description="4-hydroxyproline" evidence="2 3">
    <location>
        <position position="225"/>
    </location>
</feature>
<feature type="modified residue" description="3',4'-dihydroxyphenylalanine" evidence="2 3">
    <location>
        <position position="227"/>
    </location>
</feature>
<feature type="modified residue" description="4-hydroxyproline; partial" evidence="2 3">
    <location>
        <position position="237"/>
    </location>
</feature>
<feature type="modified residue" description="3',4'-dihydroxyphenylalanine" evidence="2 3">
    <location>
        <position position="239"/>
    </location>
</feature>
<feature type="modified residue" description="(3R,4S)-3,4-dihydroxyproline" evidence="2 3">
    <location>
        <position position="240"/>
    </location>
</feature>
<feature type="modified residue" description="4-hydroxyproline" evidence="2 3">
    <location>
        <position position="241"/>
    </location>
</feature>
<feature type="modified residue" description="3',4'-dihydroxyphenylalanine" evidence="2 3">
    <location>
        <position position="243"/>
    </location>
</feature>
<feature type="modified residue" description="4-hydroxyproline; partial" evidence="2 3">
    <location>
        <position position="247"/>
    </location>
</feature>
<feature type="modified residue" description="3',4'-dihydroxyphenylalanine" evidence="2 3">
    <location>
        <position position="249"/>
    </location>
</feature>
<feature type="modified residue" description="(3R,4S)-3,4-dihydroxyproline" evidence="2 3">
    <location>
        <position position="250"/>
    </location>
</feature>
<feature type="modified residue" description="4-hydroxyproline" evidence="2 3">
    <location>
        <position position="251"/>
    </location>
</feature>
<feature type="modified residue" description="3',4'-dihydroxyphenylalanine" evidence="2 3">
    <location>
        <position position="253"/>
    </location>
</feature>
<feature type="modified residue" description="4-hydroxyproline; partial" evidence="2 3">
    <location>
        <position position="257"/>
    </location>
</feature>
<feature type="modified residue" description="3',4'-dihydroxyphenylalanine" evidence="2 3">
    <location>
        <position position="259"/>
    </location>
</feature>
<feature type="modified residue" description="(3R,4S)-3,4-dihydroxyproline" evidence="2 3">
    <location>
        <position position="260"/>
    </location>
</feature>
<feature type="modified residue" description="4-hydroxyproline" evidence="2 3">
    <location>
        <position position="261"/>
    </location>
</feature>
<feature type="modified residue" description="3',4'-dihydroxyphenylalanine" evidence="2 3">
    <location>
        <position position="263"/>
    </location>
</feature>
<feature type="modified residue" description="4-hydroxyproline; partial" evidence="2 3">
    <location>
        <position position="285"/>
    </location>
</feature>
<feature type="modified residue" description="3',4'-dihydroxyphenylalanine" evidence="2 3">
    <location>
        <position position="287"/>
    </location>
</feature>
<feature type="modified residue" description="(3R,4S)-3,4-dihydroxyproline" evidence="2 3">
    <location>
        <position position="288"/>
    </location>
</feature>
<feature type="modified residue" description="4-hydroxyproline" evidence="2 3">
    <location>
        <position position="289"/>
    </location>
</feature>
<feature type="modified residue" description="3',4'-dihydroxyphenylalanine" evidence="2 3">
    <location>
        <position position="291"/>
    </location>
</feature>
<feature type="modified residue" description="4-hydroxyproline; partial" evidence="2 3">
    <location>
        <position position="295"/>
    </location>
</feature>
<feature type="modified residue" description="3',4'-dihydroxyphenylalanine" evidence="2 3">
    <location>
        <position position="297"/>
    </location>
</feature>
<feature type="modified residue" description="(3R,4S)-3,4-dihydroxyproline" evidence="2 3">
    <location>
        <position position="298"/>
    </location>
</feature>
<feature type="modified residue" description="4-hydroxyproline" evidence="2 3">
    <location>
        <position position="299"/>
    </location>
</feature>
<feature type="modified residue" description="3',4'-dihydroxyphenylalanine" evidence="2 3">
    <location>
        <position position="301"/>
    </location>
</feature>
<feature type="modified residue" description="4-hydroxyproline; partial" evidence="2 3">
    <location>
        <position position="305"/>
    </location>
</feature>
<feature type="modified residue" description="3',4'-dihydroxyphenylalanine" evidence="2 3">
    <location>
        <position position="307"/>
    </location>
</feature>
<feature type="modified residue" description="(3R,4S)-3,4-dihydroxyproline" evidence="2 3">
    <location>
        <position position="308"/>
    </location>
</feature>
<feature type="modified residue" description="4-hydroxyproline" evidence="2 3">
    <location>
        <position position="309"/>
    </location>
</feature>
<feature type="modified residue" description="3',4'-dihydroxyphenylalanine" evidence="2 3">
    <location>
        <position position="311"/>
    </location>
</feature>
<feature type="modified residue" description="4-hydroxyproline; partial" evidence="2 3">
    <location>
        <position position="315"/>
    </location>
</feature>
<feature type="modified residue" description="3',4'-dihydroxyphenylalanine" evidence="2 3">
    <location>
        <position position="317"/>
    </location>
</feature>
<feature type="modified residue" description="(3R,4S)-3,4-dihydroxyproline" evidence="2 3">
    <location>
        <position position="318"/>
    </location>
</feature>
<feature type="modified residue" description="4-hydroxyproline" evidence="2 3">
    <location>
        <position position="319"/>
    </location>
</feature>
<feature type="modified residue" description="3',4'-dihydroxyphenylalanine" evidence="2 3">
    <location>
        <position position="321"/>
    </location>
</feature>
<feature type="modified residue" description="4-hydroxyproline; partial" evidence="2 3">
    <location>
        <position position="325"/>
    </location>
</feature>
<feature type="modified residue" description="3',4'-dihydroxyphenylalanine" evidence="2 3">
    <location>
        <position position="327"/>
    </location>
</feature>
<feature type="modified residue" description="(3R,4S)-3,4-dihydroxyproline" evidence="2 3">
    <location>
        <position position="328"/>
    </location>
</feature>
<feature type="modified residue" description="4-hydroxyproline" evidence="2 3">
    <location>
        <position position="329"/>
    </location>
</feature>
<feature type="modified residue" description="3',4'-dihydroxyphenylalanine" evidence="2 3">
    <location>
        <position position="331"/>
    </location>
</feature>
<feature type="modified residue" description="4-hydroxyproline; partial" evidence="2 3">
    <location>
        <position position="335"/>
    </location>
</feature>
<feature type="modified residue" description="3',4'-dihydroxyphenylalanine" evidence="2 3">
    <location>
        <position position="337"/>
    </location>
</feature>
<feature type="modified residue" description="(3R,4S)-3,4-dihydroxyproline" evidence="2 3">
    <location>
        <position position="338"/>
    </location>
</feature>
<feature type="modified residue" description="4-hydroxyproline" evidence="2 3">
    <location>
        <position position="339"/>
    </location>
</feature>
<feature type="modified residue" description="3',4'-dihydroxyphenylalanine" evidence="2 3">
    <location>
        <position position="341"/>
    </location>
</feature>
<feature type="modified residue" description="4-hydroxyproline; partial" evidence="2 3">
    <location>
        <position position="351"/>
    </location>
</feature>
<feature type="modified residue" description="3',4'-dihydroxyphenylalanine" evidence="4 5">
    <location>
        <position position="353"/>
    </location>
</feature>
<feature type="modified residue" description="(3R,4S)-3,4-dihydroxyproline" evidence="4 5">
    <location>
        <position position="354"/>
    </location>
</feature>
<feature type="modified residue" description="3',4'-dihydroxyphenylalanine" evidence="4 5">
    <location>
        <position position="357"/>
    </location>
</feature>
<feature type="modified residue" description="4-hydroxyproline; partial" evidence="2 3">
    <location>
        <position position="361"/>
    </location>
</feature>
<feature type="modified residue" description="3',4'-dihydroxyphenylalanine" evidence="2 3">
    <location>
        <position position="363"/>
    </location>
</feature>
<feature type="modified residue" description="(3R,4S)-3,4-dihydroxyproline" evidence="2 3">
    <location>
        <position position="364"/>
    </location>
</feature>
<feature type="modified residue" description="4-hydroxyproline" evidence="2 3">
    <location>
        <position position="365"/>
    </location>
</feature>
<feature type="modified residue" description="3',4'-dihydroxyphenylalanine" evidence="2 3">
    <location>
        <position position="367"/>
    </location>
</feature>
<feature type="modified residue" description="4-hydroxyproline; partial" evidence="2 3">
    <location>
        <position position="371"/>
    </location>
</feature>
<feature type="modified residue" description="3',4'-dihydroxyphenylalanine" evidence="2 3">
    <location>
        <position position="373"/>
    </location>
</feature>
<feature type="modified residue" description="(3R,4S)-3,4-dihydroxyproline" evidence="2 3">
    <location>
        <position position="374"/>
    </location>
</feature>
<feature type="modified residue" description="4-hydroxyproline" evidence="2 3">
    <location>
        <position position="375"/>
    </location>
</feature>
<feature type="modified residue" description="3',4'-dihydroxyphenylalanine" evidence="2 3">
    <location>
        <position position="377"/>
    </location>
</feature>
<feature type="modified residue" description="4-hydroxyproline; partial" evidence="2 3">
    <location>
        <position position="387"/>
    </location>
</feature>
<feature type="modified residue" description="3',4'-dihydroxyphenylalanine" evidence="2 3">
    <location>
        <position position="389"/>
    </location>
</feature>
<feature type="modified residue" description="(3R,4S)-3,4-dihydroxyproline" evidence="2 3">
    <location>
        <position position="390"/>
    </location>
</feature>
<feature type="modified residue" description="4-hydroxyproline" evidence="2 3">
    <location>
        <position position="391"/>
    </location>
</feature>
<feature type="modified residue" description="3',4'-dihydroxyphenylalanine" evidence="2 3">
    <location>
        <position position="393"/>
    </location>
</feature>
<feature type="modified residue" description="4-hydroxyproline; partial" evidence="2 3">
    <location>
        <position position="397"/>
    </location>
</feature>
<feature type="modified residue" description="3',4'-dihydroxyphenylalanine" evidence="2 3">
    <location>
        <position position="399"/>
    </location>
</feature>
<feature type="modified residue" description="(3R,4S)-3,4-dihydroxyproline" evidence="2 3">
    <location>
        <position position="400"/>
    </location>
</feature>
<feature type="modified residue" description="4-hydroxyproline" evidence="2 3">
    <location>
        <position position="401"/>
    </location>
</feature>
<feature type="modified residue" description="3',4'-dihydroxyphenylalanine" evidence="2 3">
    <location>
        <position position="403"/>
    </location>
</feature>
<feature type="modified residue" description="4-hydroxyproline; partial" evidence="2 3">
    <location>
        <position position="407"/>
    </location>
</feature>
<feature type="modified residue" description="3',4'-dihydroxyphenylalanine" evidence="2 3">
    <location>
        <position position="409"/>
    </location>
</feature>
<feature type="modified residue" description="(3R,4S)-3,4-dihydroxyproline" evidence="2 3">
    <location>
        <position position="410"/>
    </location>
</feature>
<feature type="modified residue" description="4-hydroxyproline" evidence="2 3">
    <location>
        <position position="411"/>
    </location>
</feature>
<feature type="modified residue" description="3',4'-dihydroxyphenylalanine" evidence="2 3">
    <location>
        <position position="413"/>
    </location>
</feature>
<feature type="modified residue" description="4-hydroxyproline; partial" evidence="2 3">
    <location>
        <position position="423"/>
    </location>
</feature>
<feature type="modified residue" description="3',4'-dihydroxyphenylalanine" evidence="4 5">
    <location>
        <position position="425"/>
    </location>
</feature>
<feature type="modified residue" description="(3R,4S)-3,4-dihydroxyproline" evidence="4 5">
    <location>
        <position position="426"/>
    </location>
</feature>
<feature type="modified residue" description="3',4'-dihydroxyphenylalanine" evidence="4 5">
    <location>
        <position position="429"/>
    </location>
</feature>
<feature type="modified residue" description="4-hydroxyproline; partial" evidence="2 3">
    <location>
        <position position="433"/>
    </location>
</feature>
<feature type="modified residue" description="3',4'-dihydroxyphenylalanine" evidence="2 3">
    <location>
        <position position="435"/>
    </location>
</feature>
<feature type="modified residue" description="(3R,4S)-3,4-dihydroxyproline" evidence="2 3">
    <location>
        <position position="436"/>
    </location>
</feature>
<feature type="modified residue" description="4-hydroxyproline" evidence="2 3">
    <location>
        <position position="437"/>
    </location>
</feature>
<feature type="modified residue" description="3',4'-dihydroxyphenylalanine" evidence="2 3">
    <location>
        <position position="439"/>
    </location>
</feature>
<feature type="modified residue" description="4-hydroxyproline; partial" evidence="2 3">
    <location>
        <position position="443"/>
    </location>
</feature>
<feature type="modified residue" description="3',4'-dihydroxyphenylalanine" evidence="2 3">
    <location>
        <position position="445"/>
    </location>
</feature>
<feature type="modified residue" description="(3R,4S)-3,4-dihydroxyproline" evidence="2 3">
    <location>
        <position position="446"/>
    </location>
</feature>
<feature type="modified residue" description="4-hydroxyproline" evidence="2 3">
    <location>
        <position position="447"/>
    </location>
</feature>
<feature type="modified residue" description="3',4'-dihydroxyphenylalanine" evidence="2 3">
    <location>
        <position position="449"/>
    </location>
</feature>
<feature type="modified residue" description="4-hydroxyproline; partial" evidence="2 3">
    <location>
        <position position="459"/>
    </location>
</feature>
<feature type="modified residue" description="3',4'-dihydroxyphenylalanine" evidence="4 5">
    <location>
        <position position="461"/>
    </location>
</feature>
<feature type="modified residue" description="(3R,4S)-3,4-dihydroxyproline" evidence="4 5">
    <location>
        <position position="462"/>
    </location>
</feature>
<feature type="modified residue" description="3',4'-dihydroxyphenylalanine" evidence="4 5">
    <location>
        <position position="465"/>
    </location>
</feature>
<feature type="modified residue" description="4-hydroxyproline; partial" evidence="2 3">
    <location>
        <position position="469"/>
    </location>
</feature>
<feature type="modified residue" description="3',4'-dihydroxyphenylalanine" evidence="4 5">
    <location>
        <position position="471"/>
    </location>
</feature>
<feature type="modified residue" description="(3R,4S)-3,4-dihydroxyproline" evidence="4 5">
    <location>
        <position position="472"/>
    </location>
</feature>
<feature type="modified residue" description="3',4'-dihydroxyphenylalanine" evidence="4 5">
    <location>
        <position position="475"/>
    </location>
</feature>
<feature type="modified residue" description="4-hydroxyproline; partial" evidence="2 3">
    <location>
        <position position="479"/>
    </location>
</feature>
<feature type="modified residue" description="3',4'-dihydroxyphenylalanine" evidence="2 3">
    <location>
        <position position="481"/>
    </location>
</feature>
<feature type="modified residue" description="(3R,4S)-3,4-dihydroxyproline" evidence="2 3">
    <location>
        <position position="482"/>
    </location>
</feature>
<feature type="modified residue" description="4-hydroxyproline" evidence="2 3">
    <location>
        <position position="483"/>
    </location>
</feature>
<feature type="modified residue" description="3',4'-dihydroxyphenylalanine" evidence="2 3">
    <location>
        <position position="485"/>
    </location>
</feature>
<feature type="modified residue" description="4-hydroxyproline; partial" evidence="4 5">
    <location>
        <position position="519"/>
    </location>
</feature>
<feature type="modified residue" description="3',4'-dihydroxyphenylalanine" evidence="4 5">
    <location>
        <position position="521"/>
    </location>
</feature>
<feature type="modified residue" description="(3R,4S)-3,4-dihydroxyproline" evidence="4 5">
    <location>
        <position position="522"/>
    </location>
</feature>
<feature type="modified residue" description="4-hydroxyproline" evidence="4 5">
    <location>
        <position position="523"/>
    </location>
</feature>
<feature type="modified residue" description="3',4'-dihydroxyphenylalanine" evidence="4 5">
    <location>
        <position position="525"/>
    </location>
</feature>
<feature type="modified residue" description="3',4'-dihydroxyphenylalanine" evidence="4 5">
    <location>
        <position position="541"/>
    </location>
</feature>
<feature type="modified residue" description="(3R,4S)-3,4-dihydroxyproline" evidence="4 5">
    <location>
        <position position="542"/>
    </location>
</feature>
<feature type="modified residue" description="4-hydroxyproline" evidence="4 5">
    <location>
        <position position="543"/>
    </location>
</feature>
<feature type="modified residue" description="3',4'-dihydroxyphenylalanine" evidence="4 5">
    <location>
        <position position="545"/>
    </location>
</feature>
<feature type="modified residue" description="4-hydroxyproline; partial" evidence="2 3">
    <location>
        <position position="549"/>
    </location>
</feature>
<feature type="modified residue" description="3',4'-dihydroxyphenylalanine" evidence="4 5">
    <location>
        <position position="551"/>
    </location>
</feature>
<feature type="modified residue" description="(3R,4S)-3,4-dihydroxyproline" evidence="4 5">
    <location>
        <position position="552"/>
    </location>
</feature>
<feature type="modified residue" description="3',4'-dihydroxyphenylalanine" evidence="4 5">
    <location>
        <position position="555"/>
    </location>
</feature>
<feature type="modified residue" description="4-hydroxyproline; partial" evidence="2 3">
    <location>
        <position position="559"/>
    </location>
</feature>
<feature type="modified residue" description="3',4'-dihydroxyphenylalanine" evidence="2 3">
    <location>
        <position position="561"/>
    </location>
</feature>
<feature type="modified residue" description="(3R,4S)-3,4-dihydroxyproline" evidence="2 3">
    <location>
        <position position="562"/>
    </location>
</feature>
<feature type="modified residue" description="4-hydroxyproline" evidence="2 3">
    <location>
        <position position="563"/>
    </location>
</feature>
<feature type="modified residue" description="3',4'-dihydroxyphenylalanine" evidence="2 3">
    <location>
        <position position="565"/>
    </location>
</feature>
<feature type="modified residue" description="4-hydroxyproline; partial" evidence="2 3">
    <location>
        <position position="569"/>
    </location>
</feature>
<feature type="modified residue" description="3',4'-dihydroxyphenylalanine" evidence="2 3">
    <location>
        <position position="571"/>
    </location>
</feature>
<feature type="modified residue" description="(3R,4S)-3,4-dihydroxyproline" evidence="2 3">
    <location>
        <position position="572"/>
    </location>
</feature>
<feature type="modified residue" description="4-hydroxyproline" evidence="2 3">
    <location>
        <position position="573"/>
    </location>
</feature>
<feature type="modified residue" description="3',4'-dihydroxyphenylalanine" evidence="2 3">
    <location>
        <position position="575"/>
    </location>
</feature>
<feature type="modified residue" description="4-hydroxyproline; partial" evidence="2 3">
    <location>
        <position position="579"/>
    </location>
</feature>
<feature type="modified residue" description="3',4'-dihydroxyphenylalanine" evidence="2 3">
    <location>
        <position position="581"/>
    </location>
</feature>
<feature type="modified residue" description="(3R,4S)-3,4-dihydroxyproline" evidence="2 3">
    <location>
        <position position="582"/>
    </location>
</feature>
<feature type="modified residue" description="4-hydroxyproline" evidence="2 3">
    <location>
        <position position="583"/>
    </location>
</feature>
<feature type="modified residue" description="3',4'-dihydroxyphenylalanine" evidence="2 3">
    <location>
        <position position="585"/>
    </location>
</feature>
<feature type="modified residue" description="4-hydroxyproline; partial" evidence="2 3">
    <location>
        <position position="595"/>
    </location>
</feature>
<feature type="modified residue" description="3',4'-dihydroxyphenylalanine" evidence="4 5">
    <location>
        <position position="597"/>
    </location>
</feature>
<feature type="modified residue" description="(3R,4S)-3,4-dihydroxyproline" evidence="4 5">
    <location>
        <position position="598"/>
    </location>
</feature>
<feature type="modified residue" description="3',4'-dihydroxyphenylalanine" evidence="4 5">
    <location>
        <position position="601"/>
    </location>
</feature>
<feature type="modified residue" description="4-hydroxyproline; partial" evidence="2 3">
    <location>
        <position position="605"/>
    </location>
</feature>
<feature type="modified residue" description="3',4'-dihydroxyphenylalanine" evidence="2 3">
    <location>
        <position position="607"/>
    </location>
</feature>
<feature type="modified residue" description="(3R,4S)-3,4-dihydroxyproline" evidence="2 3">
    <location>
        <position position="608"/>
    </location>
</feature>
<feature type="modified residue" description="4-hydroxyproline" evidence="2 3">
    <location>
        <position position="609"/>
    </location>
</feature>
<feature type="modified residue" description="3',4'-dihydroxyphenylalanine" evidence="2 3">
    <location>
        <position position="611"/>
    </location>
</feature>
<feature type="modified residue" description="4-hydroxyproline; partial" evidence="2 3">
    <location>
        <position position="615"/>
    </location>
</feature>
<feature type="modified residue" description="3',4'-dihydroxyphenylalanine" evidence="2 3">
    <location>
        <position position="617"/>
    </location>
</feature>
<feature type="modified residue" description="(3R,4S)-3,4-dihydroxyproline" evidence="2 3">
    <location>
        <position position="618"/>
    </location>
</feature>
<feature type="modified residue" description="4-hydroxyproline" evidence="2 3">
    <location>
        <position position="619"/>
    </location>
</feature>
<feature type="modified residue" description="3',4'-dihydroxyphenylalanine" evidence="2 3">
    <location>
        <position position="621"/>
    </location>
</feature>
<feature type="modified residue" description="4-hydroxyproline; partial" evidence="2 3">
    <location>
        <position position="625"/>
    </location>
</feature>
<feature type="modified residue" description="3',4'-dihydroxyphenylalanine" evidence="2 3">
    <location>
        <position position="627"/>
    </location>
</feature>
<feature type="modified residue" description="(3R,4S)-3,4-dihydroxyproline" evidence="2 3">
    <location>
        <position position="628"/>
    </location>
</feature>
<feature type="modified residue" description="4-hydroxyproline" evidence="2 3">
    <location>
        <position position="629"/>
    </location>
</feature>
<feature type="modified residue" description="3',4'-dihydroxyphenylalanine" evidence="2 3">
    <location>
        <position position="631"/>
    </location>
</feature>
<feature type="modified residue" description="4-hydroxyproline; partial" evidence="2 3">
    <location>
        <position position="635"/>
    </location>
</feature>
<feature type="modified residue" description="3',4'-dihydroxyphenylalanine" evidence="4 5">
    <location>
        <position position="637"/>
    </location>
</feature>
<feature type="modified residue" description="(3R,4S)-3,4-dihydroxyproline" evidence="4 5">
    <location>
        <position position="638"/>
    </location>
</feature>
<feature type="modified residue" description="3',4'-dihydroxyphenylalanine" evidence="4 5">
    <location>
        <position position="641"/>
    </location>
</feature>
<feature type="modified residue" description="4-hydroxyproline; partial" evidence="2 3">
    <location>
        <position position="645"/>
    </location>
</feature>
<feature type="modified residue" description="3',4'-dihydroxyphenylalanine" evidence="2 3">
    <location>
        <position position="647"/>
    </location>
</feature>
<feature type="modified residue" description="(3R,4S)-3,4-dihydroxyproline" evidence="2 3">
    <location>
        <position position="648"/>
    </location>
</feature>
<feature type="modified residue" description="4-hydroxyproline" evidence="2 3">
    <location>
        <position position="649"/>
    </location>
</feature>
<feature type="modified residue" description="3',4'-dihydroxyphenylalanine" evidence="2 3">
    <location>
        <position position="651"/>
    </location>
</feature>
<feature type="modified residue" description="3',4'-dihydroxyphenylalanine" evidence="4 5">
    <location>
        <position position="657"/>
    </location>
</feature>
<feature type="modified residue" description="(3R,4S)-3,4-dihydroxyproline" evidence="4 5">
    <location>
        <position position="658"/>
    </location>
</feature>
<feature type="modified residue" description="4-hydroxyproline" evidence="4 5">
    <location>
        <position position="659"/>
    </location>
</feature>
<feature type="modified residue" description="3',4'-dihydroxyphenylalanine" evidence="4 5">
    <location>
        <position position="661"/>
    </location>
</feature>
<feature type="modified residue" description="4-hydroxyproline; partial" evidence="2 3">
    <location>
        <position position="665"/>
    </location>
</feature>
<feature type="modified residue" description="3',4'-dihydroxyphenylalanine" evidence="2 3">
    <location>
        <position position="667"/>
    </location>
</feature>
<feature type="modified residue" description="(3R,4S)-3,4-dihydroxyproline" evidence="2 3">
    <location>
        <position position="668"/>
    </location>
</feature>
<feature type="modified residue" description="4-hydroxyproline" evidence="2 3">
    <location>
        <position position="669"/>
    </location>
</feature>
<feature type="modified residue" description="3',4'-dihydroxyphenylalanine" evidence="2 3">
    <location>
        <position position="671"/>
    </location>
</feature>
<feature type="modified residue" description="4-hydroxyproline; partial" evidence="2 3">
    <location>
        <position position="675"/>
    </location>
</feature>
<feature type="modified residue" description="3',4'-dihydroxyphenylalanine" evidence="2 3">
    <location>
        <position position="677"/>
    </location>
</feature>
<feature type="modified residue" description="(3R,4S)-3,4-dihydroxyproline" evidence="2 3">
    <location>
        <position position="678"/>
    </location>
</feature>
<feature type="modified residue" description="4-hydroxyproline" evidence="2 3">
    <location>
        <position position="679"/>
    </location>
</feature>
<feature type="modified residue" description="3',4'-dihydroxyphenylalanine" evidence="2 3">
    <location>
        <position position="681"/>
    </location>
</feature>
<feature type="modified residue" description="4-hydroxyproline; partial" evidence="2 3">
    <location>
        <position position="701"/>
    </location>
</feature>
<feature type="modified residue" description="3',4'-dihydroxyphenylalanine" evidence="2 3">
    <location>
        <position position="703"/>
    </location>
</feature>
<feature type="modified residue" description="(3R,4S)-3,4-dihydroxyproline" evidence="2 3">
    <location>
        <position position="704"/>
    </location>
</feature>
<feature type="modified residue" description="4-hydroxyproline" evidence="2 3">
    <location>
        <position position="705"/>
    </location>
</feature>
<feature type="modified residue" description="3',4'-dihydroxyphenylalanine" evidence="2 3">
    <location>
        <position position="707"/>
    </location>
</feature>
<feature type="modified residue" description="4-hydroxyproline; partial" evidence="2 3">
    <location>
        <position position="711"/>
    </location>
</feature>
<feature type="modified residue" description="3',4'-dihydroxyphenylalanine" evidence="2 3">
    <location>
        <position position="713"/>
    </location>
</feature>
<feature type="modified residue" description="(3R,4S)-3,4-dihydroxyproline" evidence="2 3">
    <location>
        <position position="714"/>
    </location>
</feature>
<feature type="modified residue" description="4-hydroxyproline" evidence="2 3">
    <location>
        <position position="715"/>
    </location>
</feature>
<feature type="modified residue" description="3',4'-dihydroxyphenylalanine" evidence="2 3">
    <location>
        <position position="717"/>
    </location>
</feature>
<feature type="modified residue" description="4-hydroxyproline; partial" evidence="2 3">
    <location>
        <position position="721"/>
    </location>
</feature>
<feature type="modified residue" description="3',4'-dihydroxyphenylalanine" evidence="2 3">
    <location>
        <position position="723"/>
    </location>
</feature>
<feature type="modified residue" description="(3R,4S)-3,4-dihydroxyproline" evidence="2 3">
    <location>
        <position position="724"/>
    </location>
</feature>
<feature type="modified residue" description="4-hydroxyproline" evidence="2 3">
    <location>
        <position position="725"/>
    </location>
</feature>
<feature type="modified residue" description="3',4'-dihydroxyphenylalanine" evidence="2 3">
    <location>
        <position position="727"/>
    </location>
</feature>
<feature type="modified residue" description="4-hydroxyproline; partial" evidence="2 3">
    <location>
        <position position="737"/>
    </location>
</feature>
<feature type="modified residue" description="3',4'-dihydroxyphenylalanine" evidence="4 5">
    <location>
        <position position="739"/>
    </location>
</feature>
<feature type="modified residue" description="(3R,4S)-3,4-dihydroxyproline" evidence="4 5">
    <location>
        <position position="740"/>
    </location>
</feature>
<feature type="modified residue" description="3',4'-dihydroxyphenylalanine" evidence="4 5">
    <location>
        <position position="743"/>
    </location>
</feature>
<feature type="modified residue" description="4-hydroxyproline; partial" evidence="2 3">
    <location>
        <position position="753"/>
    </location>
</feature>
<feature type="modified residue" description="3',4'-dihydroxyphenylalanine" evidence="4 5">
    <location>
        <position position="755"/>
    </location>
</feature>
<feature type="modified residue" description="(3R,4S)-3,4-dihydroxyproline" evidence="4 5">
    <location>
        <position position="756"/>
    </location>
</feature>
<feature type="modified residue" description="4-hydroxyproline" evidence="4 5">
    <location>
        <position position="757"/>
    </location>
</feature>
<feature type="modified residue" description="3',4'-dihydroxyphenylalanine" evidence="4 5">
    <location>
        <position position="759"/>
    </location>
</feature>
<feature type="modified residue" description="4-hydroxyproline; partial" evidence="2 3">
    <location>
        <position position="763"/>
    </location>
</feature>
<feature type="modified residue" description="3',4'-dihydroxyphenylalanine" evidence="2 3">
    <location>
        <position position="765"/>
    </location>
</feature>
<feature type="modified residue" description="(3R,4S)-3,4-dihydroxyproline" evidence="2 3">
    <location>
        <position position="766"/>
    </location>
</feature>
<feature type="modified residue" description="4-hydroxyproline" evidence="2 3">
    <location>
        <position position="767"/>
    </location>
</feature>
<feature type="modified residue" description="3',4'-dihydroxyphenylalanine" evidence="2 3">
    <location>
        <position position="769"/>
    </location>
</feature>
<feature type="modified residue" description="4-hydroxyproline; partial" evidence="4 5">
    <location>
        <position position="773"/>
    </location>
</feature>
<feature type="modified residue" description="3',4'-dihydroxyphenylalanine" evidence="4 5">
    <location>
        <position position="775"/>
    </location>
</feature>
<feature type="modified residue" description="(3R,4S)-3,4-dihydroxyproline" evidence="4 5">
    <location>
        <position position="776"/>
    </location>
</feature>
<feature type="modified residue" description="4-hydroxyproline" evidence="4 5">
    <location>
        <position position="777"/>
    </location>
</feature>
<feature type="modified residue" description="3',4'-dihydroxyphenylalanine" evidence="4 5">
    <location>
        <position position="779"/>
    </location>
</feature>
<feature type="modified residue" description="4-hydroxyproline; partial" evidence="4 5">
    <location>
        <position position="813"/>
    </location>
</feature>
<feature type="modified residue" description="3',4'-dihydroxyphenylalanine" evidence="4 5">
    <location>
        <position position="815"/>
    </location>
</feature>
<feature type="modified residue" description="(3R,4S)-3,4-dihydroxyproline" evidence="4 5">
    <location>
        <position position="816"/>
    </location>
</feature>
<feature type="modified residue" description="4-hydroxyproline" evidence="4 5">
    <location>
        <position position="817"/>
    </location>
</feature>
<feature type="modified residue" description="3',4'-dihydroxyphenylalanine" evidence="4 5">
    <location>
        <position position="819"/>
    </location>
</feature>
<feature type="modified residue" description="4-hydroxyproline; partial" evidence="4 5">
    <location>
        <position position="833"/>
    </location>
</feature>
<feature type="modified residue" description="3',4'-dihydroxyphenylalanine" evidence="4 5">
    <location>
        <position position="835"/>
    </location>
</feature>
<feature type="modified residue" description="(3R,4S)-3,4-dihydroxyproline" evidence="4 5">
    <location>
        <position position="836"/>
    </location>
</feature>
<feature type="modified residue" description="4-hydroxyproline" evidence="4 5">
    <location>
        <position position="837"/>
    </location>
</feature>
<feature type="modified residue" description="3',4'-dihydroxyphenylalanine" evidence="4 5">
    <location>
        <position position="839"/>
    </location>
</feature>
<feature type="modified residue" description="3',4'-dihydroxyphenylalanine" evidence="4 5">
    <location>
        <position position="865"/>
    </location>
</feature>
<feature type="modified residue" description="(3R,4S)-3,4-dihydroxyproline" evidence="4 5">
    <location>
        <position position="866"/>
    </location>
</feature>
<feature type="modified residue" description="4-hydroxyproline" evidence="4 5">
    <location>
        <position position="867"/>
    </location>
</feature>
<feature type="modified residue" description="3',4'-dihydroxyphenylalanine" evidence="4 5">
    <location>
        <position position="869"/>
    </location>
</feature>
<feature type="non-terminal residue">
    <location>
        <position position="1"/>
    </location>
</feature>
<name>FP1_MYTED</name>
<accession>Q25460</accession>
<evidence type="ECO:0000256" key="1">
    <source>
        <dbReference type="SAM" id="MobiDB-lite"/>
    </source>
</evidence>
<evidence type="ECO:0000269" key="2">
    <source>
    </source>
</evidence>
<evidence type="ECO:0000269" key="3">
    <source ref="3"/>
</evidence>
<evidence type="ECO:0000305" key="4">
    <source>
    </source>
</evidence>
<evidence type="ECO:0000305" key="5">
    <source ref="3"/>
</evidence>
<gene>
    <name type="primary">FP1</name>
</gene>
<protein>
    <recommendedName>
        <fullName>Adhesive plaque matrix protein</fullName>
    </recommendedName>
    <alternativeName>
        <fullName>Foot protein 1</fullName>
    </alternativeName>
    <alternativeName>
        <fullName>MEFP1</fullName>
    </alternativeName>
    <alternativeName>
        <fullName>Polyphenolic adhesive protein</fullName>
    </alternativeName>
</protein>
<comment type="function">
    <text>Provides adhesiveness to the mussel's foot. Mussels produce one of the strongest water insoluble glues. The mussel's adhesive is a bundle of threads, called a byssus, formed by a fibrous collagenous core coated with adhesive proteins.</text>
</comment>
<comment type="subcellular location">
    <subcellularLocation>
        <location>Secreted</location>
    </subcellularLocation>
</comment>
<comment type="tissue specificity">
    <text>Produced by the byssal gland.</text>
</comment>
<comment type="domain">
    <text>Almost exclusively composed of repeats of a decapeptide.</text>
</comment>
<comment type="PTM">
    <text evidence="2 3">Hydroxylated on second and third proline and last tyrosine residues (to L-DOPA = 3',4'-dihydroxyphenylalanine) of the tandem repeats.</text>
</comment>
<comment type="online information" name="Protein Spotlight">
    <link uri="https://www.proteinspotlight.org/back_issues/002"/>
    <text>Sticky business - Issue 2 of September 2001</text>
</comment>